<sequence>MMNQSITPPTHPPMSQRFRGYLPVVVDVETGGFNWNHHALLEIACIPIEMDDTGRLYPGEVTSTHVIPAPGTDIDPKSLEVTGIILDHPFRFAKEEKLALEHIFTPVRATMKKYKCQRAILVGHNAHFDLNFLNAAVTRTAYKRNPFHQFSVFDTVTLAGMAYGQTVLARAVQAAGLDWNAADAHSAVYDAEKTAHLFCTITNTWPLVVAG</sequence>
<protein>
    <recommendedName>
        <fullName evidence="1">Ribonuclease T</fullName>
        <ecNumber evidence="1">3.1.13.-</ecNumber>
    </recommendedName>
    <alternativeName>
        <fullName evidence="1">Exoribonuclease T</fullName>
        <shortName evidence="1">RNase T</shortName>
    </alternativeName>
</protein>
<gene>
    <name evidence="1" type="primary">rnt</name>
    <name type="ordered locus">XF_2146</name>
</gene>
<comment type="function">
    <text evidence="1">Trims short 3' overhangs of a variety of RNA species, leaving a one or two nucleotide 3' overhang. Responsible for the end-turnover of tRNA: specifically removes the terminal AMP residue from uncharged tRNA (tRNA-C-C-A). Also appears to be involved in tRNA biosynthesis.</text>
</comment>
<comment type="cofactor">
    <cofactor evidence="1">
        <name>Mg(2+)</name>
        <dbReference type="ChEBI" id="CHEBI:18420"/>
    </cofactor>
    <text evidence="1">Binds two Mg(2+) per subunit. The active form of the enzyme binds two Mg(2+) ions in its active site. The first Mg(2+) forms only one salt bridge with the protein.</text>
</comment>
<comment type="subunit">
    <text evidence="1">Homodimer.</text>
</comment>
<comment type="similarity">
    <text evidence="1">Belongs to the RNase T family.</text>
</comment>
<keyword id="KW-0269">Exonuclease</keyword>
<keyword id="KW-0378">Hydrolase</keyword>
<keyword id="KW-0460">Magnesium</keyword>
<keyword id="KW-0479">Metal-binding</keyword>
<keyword id="KW-0540">Nuclease</keyword>
<keyword id="KW-0819">tRNA processing</keyword>
<name>RNT_XYLFA</name>
<feature type="chain" id="PRO_0000208983" description="Ribonuclease T">
    <location>
        <begin position="1"/>
        <end position="211"/>
    </location>
</feature>
<feature type="domain" description="Exonuclease" evidence="1">
    <location>
        <begin position="24"/>
        <end position="198"/>
    </location>
</feature>
<feature type="active site" description="Proton donor/acceptor" evidence="1">
    <location>
        <position position="185"/>
    </location>
</feature>
<feature type="binding site" evidence="1">
    <location>
        <position position="27"/>
    </location>
    <ligand>
        <name>Mg(2+)</name>
        <dbReference type="ChEBI" id="CHEBI:18420"/>
        <label>1</label>
        <note>catalytic</note>
    </ligand>
</feature>
<feature type="binding site" evidence="1">
    <location>
        <position position="27"/>
    </location>
    <ligand>
        <name>Mg(2+)</name>
        <dbReference type="ChEBI" id="CHEBI:18420"/>
        <label>2</label>
        <note>catalytic</note>
    </ligand>
</feature>
<feature type="binding site" evidence="1">
    <location>
        <position position="29"/>
    </location>
    <ligand>
        <name>Mg(2+)</name>
        <dbReference type="ChEBI" id="CHEBI:18420"/>
        <label>2</label>
        <note>catalytic</note>
    </ligand>
</feature>
<feature type="binding site" evidence="1">
    <location>
        <position position="185"/>
    </location>
    <ligand>
        <name>Mg(2+)</name>
        <dbReference type="ChEBI" id="CHEBI:18420"/>
        <label>2</label>
        <note>catalytic</note>
    </ligand>
</feature>
<feature type="binding site" evidence="1">
    <location>
        <position position="190"/>
    </location>
    <ligand>
        <name>Mg(2+)</name>
        <dbReference type="ChEBI" id="CHEBI:18420"/>
        <label>2</label>
        <note>catalytic</note>
    </ligand>
</feature>
<feature type="site" description="Important for substrate binding and specificity" evidence="1">
    <location>
        <position position="33"/>
    </location>
</feature>
<feature type="site" description="Important for substrate binding and specificity" evidence="1">
    <location>
        <position position="128"/>
    </location>
</feature>
<feature type="site" description="Important for substrate binding and specificity" evidence="1">
    <location>
        <position position="150"/>
    </location>
</feature>
<reference key="1">
    <citation type="journal article" date="2000" name="Nature">
        <title>The genome sequence of the plant pathogen Xylella fastidiosa.</title>
        <authorList>
            <person name="Simpson A.J.G."/>
            <person name="Reinach F.C."/>
            <person name="Arruda P."/>
            <person name="Abreu F.A."/>
            <person name="Acencio M."/>
            <person name="Alvarenga R."/>
            <person name="Alves L.M.C."/>
            <person name="Araya J.E."/>
            <person name="Baia G.S."/>
            <person name="Baptista C.S."/>
            <person name="Barros M.H."/>
            <person name="Bonaccorsi E.D."/>
            <person name="Bordin S."/>
            <person name="Bove J.M."/>
            <person name="Briones M.R.S."/>
            <person name="Bueno M.R.P."/>
            <person name="Camargo A.A."/>
            <person name="Camargo L.E.A."/>
            <person name="Carraro D.M."/>
            <person name="Carrer H."/>
            <person name="Colauto N.B."/>
            <person name="Colombo C."/>
            <person name="Costa F.F."/>
            <person name="Costa M.C.R."/>
            <person name="Costa-Neto C.M."/>
            <person name="Coutinho L.L."/>
            <person name="Cristofani M."/>
            <person name="Dias-Neto E."/>
            <person name="Docena C."/>
            <person name="El-Dorry H."/>
            <person name="Facincani A.P."/>
            <person name="Ferreira A.J.S."/>
            <person name="Ferreira V.C.A."/>
            <person name="Ferro J.A."/>
            <person name="Fraga J.S."/>
            <person name="Franca S.C."/>
            <person name="Franco M.C."/>
            <person name="Frohme M."/>
            <person name="Furlan L.R."/>
            <person name="Garnier M."/>
            <person name="Goldman G.H."/>
            <person name="Goldman M.H.S."/>
            <person name="Gomes S.L."/>
            <person name="Gruber A."/>
            <person name="Ho P.L."/>
            <person name="Hoheisel J.D."/>
            <person name="Junqueira M.L."/>
            <person name="Kemper E.L."/>
            <person name="Kitajima J.P."/>
            <person name="Krieger J.E."/>
            <person name="Kuramae E.E."/>
            <person name="Laigret F."/>
            <person name="Lambais M.R."/>
            <person name="Leite L.C.C."/>
            <person name="Lemos E.G.M."/>
            <person name="Lemos M.V.F."/>
            <person name="Lopes S.A."/>
            <person name="Lopes C.R."/>
            <person name="Machado J.A."/>
            <person name="Machado M.A."/>
            <person name="Madeira A.M.B.N."/>
            <person name="Madeira H.M.F."/>
            <person name="Marino C.L."/>
            <person name="Marques M.V."/>
            <person name="Martins E.A.L."/>
            <person name="Martins E.M.F."/>
            <person name="Matsukuma A.Y."/>
            <person name="Menck C.F.M."/>
            <person name="Miracca E.C."/>
            <person name="Miyaki C.Y."/>
            <person name="Monteiro-Vitorello C.B."/>
            <person name="Moon D.H."/>
            <person name="Nagai M.A."/>
            <person name="Nascimento A.L.T.O."/>
            <person name="Netto L.E.S."/>
            <person name="Nhani A. Jr."/>
            <person name="Nobrega F.G."/>
            <person name="Nunes L.R."/>
            <person name="Oliveira M.A."/>
            <person name="de Oliveira M.C."/>
            <person name="de Oliveira R.C."/>
            <person name="Palmieri D.A."/>
            <person name="Paris A."/>
            <person name="Peixoto B.R."/>
            <person name="Pereira G.A.G."/>
            <person name="Pereira H.A. Jr."/>
            <person name="Pesquero J.B."/>
            <person name="Quaggio R.B."/>
            <person name="Roberto P.G."/>
            <person name="Rodrigues V."/>
            <person name="de Rosa A.J.M."/>
            <person name="de Rosa V.E. Jr."/>
            <person name="de Sa R.G."/>
            <person name="Santelli R.V."/>
            <person name="Sawasaki H.E."/>
            <person name="da Silva A.C.R."/>
            <person name="da Silva A.M."/>
            <person name="da Silva F.R."/>
            <person name="Silva W.A. Jr."/>
            <person name="da Silveira J.F."/>
            <person name="Silvestri M.L.Z."/>
            <person name="Siqueira W.J."/>
            <person name="de Souza A.A."/>
            <person name="de Souza A.P."/>
            <person name="Terenzi M.F."/>
            <person name="Truffi D."/>
            <person name="Tsai S.M."/>
            <person name="Tsuhako M.H."/>
            <person name="Vallada H."/>
            <person name="Van Sluys M.A."/>
            <person name="Verjovski-Almeida S."/>
            <person name="Vettore A.L."/>
            <person name="Zago M.A."/>
            <person name="Zatz M."/>
            <person name="Meidanis J."/>
            <person name="Setubal J.C."/>
        </authorList>
    </citation>
    <scope>NUCLEOTIDE SEQUENCE [LARGE SCALE GENOMIC DNA]</scope>
    <source>
        <strain>9a5c</strain>
    </source>
</reference>
<accession>Q9PBJ8</accession>
<dbReference type="EC" id="3.1.13.-" evidence="1"/>
<dbReference type="EMBL" id="AE003849">
    <property type="protein sequence ID" value="AAF84945.1"/>
    <property type="molecule type" value="Genomic_DNA"/>
</dbReference>
<dbReference type="PIR" id="F82593">
    <property type="entry name" value="F82593"/>
</dbReference>
<dbReference type="SMR" id="Q9PBJ8"/>
<dbReference type="STRING" id="160492.XF_2146"/>
<dbReference type="KEGG" id="xfa:XF_2146"/>
<dbReference type="eggNOG" id="COG0847">
    <property type="taxonomic scope" value="Bacteria"/>
</dbReference>
<dbReference type="HOGENOM" id="CLU_082724_0_0_6"/>
<dbReference type="Proteomes" id="UP000000812">
    <property type="component" value="Chromosome"/>
</dbReference>
<dbReference type="GO" id="GO:0005829">
    <property type="term" value="C:cytosol"/>
    <property type="evidence" value="ECO:0007669"/>
    <property type="project" value="TreeGrafter"/>
</dbReference>
<dbReference type="GO" id="GO:0008408">
    <property type="term" value="F:3'-5' exonuclease activity"/>
    <property type="evidence" value="ECO:0007669"/>
    <property type="project" value="TreeGrafter"/>
</dbReference>
<dbReference type="GO" id="GO:0000287">
    <property type="term" value="F:magnesium ion binding"/>
    <property type="evidence" value="ECO:0007669"/>
    <property type="project" value="UniProtKB-UniRule"/>
</dbReference>
<dbReference type="GO" id="GO:0003676">
    <property type="term" value="F:nucleic acid binding"/>
    <property type="evidence" value="ECO:0007669"/>
    <property type="project" value="InterPro"/>
</dbReference>
<dbReference type="GO" id="GO:0016896">
    <property type="term" value="F:RNA exonuclease activity, producing 5'-phosphomonoesters"/>
    <property type="evidence" value="ECO:0007669"/>
    <property type="project" value="UniProtKB-UniRule"/>
</dbReference>
<dbReference type="GO" id="GO:0045004">
    <property type="term" value="P:DNA replication proofreading"/>
    <property type="evidence" value="ECO:0007669"/>
    <property type="project" value="TreeGrafter"/>
</dbReference>
<dbReference type="GO" id="GO:0008033">
    <property type="term" value="P:tRNA processing"/>
    <property type="evidence" value="ECO:0007669"/>
    <property type="project" value="UniProtKB-KW"/>
</dbReference>
<dbReference type="Gene3D" id="3.30.420.10">
    <property type="entry name" value="Ribonuclease H-like superfamily/Ribonuclease H"/>
    <property type="match status" value="1"/>
</dbReference>
<dbReference type="HAMAP" id="MF_00157">
    <property type="entry name" value="RNase_T"/>
    <property type="match status" value="1"/>
</dbReference>
<dbReference type="InterPro" id="IPR013520">
    <property type="entry name" value="Exonuclease_RNaseT/DNA_pol3"/>
</dbReference>
<dbReference type="InterPro" id="IPR005987">
    <property type="entry name" value="RNase_T"/>
</dbReference>
<dbReference type="InterPro" id="IPR012337">
    <property type="entry name" value="RNaseH-like_sf"/>
</dbReference>
<dbReference type="InterPro" id="IPR036397">
    <property type="entry name" value="RNaseH_sf"/>
</dbReference>
<dbReference type="NCBIfam" id="TIGR01298">
    <property type="entry name" value="RNaseT"/>
    <property type="match status" value="1"/>
</dbReference>
<dbReference type="PANTHER" id="PTHR30231">
    <property type="entry name" value="DNA POLYMERASE III SUBUNIT EPSILON"/>
    <property type="match status" value="1"/>
</dbReference>
<dbReference type="PANTHER" id="PTHR30231:SF2">
    <property type="entry name" value="RIBONUCLEASE T"/>
    <property type="match status" value="1"/>
</dbReference>
<dbReference type="Pfam" id="PF00929">
    <property type="entry name" value="RNase_T"/>
    <property type="match status" value="1"/>
</dbReference>
<dbReference type="SMART" id="SM00479">
    <property type="entry name" value="EXOIII"/>
    <property type="match status" value="1"/>
</dbReference>
<dbReference type="SUPFAM" id="SSF53098">
    <property type="entry name" value="Ribonuclease H-like"/>
    <property type="match status" value="1"/>
</dbReference>
<proteinExistence type="inferred from homology"/>
<organism>
    <name type="scientific">Xylella fastidiosa (strain 9a5c)</name>
    <dbReference type="NCBI Taxonomy" id="160492"/>
    <lineage>
        <taxon>Bacteria</taxon>
        <taxon>Pseudomonadati</taxon>
        <taxon>Pseudomonadota</taxon>
        <taxon>Gammaproteobacteria</taxon>
        <taxon>Lysobacterales</taxon>
        <taxon>Lysobacteraceae</taxon>
        <taxon>Xylella</taxon>
    </lineage>
</organism>
<evidence type="ECO:0000255" key="1">
    <source>
        <dbReference type="HAMAP-Rule" id="MF_00157"/>
    </source>
</evidence>